<reference key="1">
    <citation type="journal article" date="2007" name="Genome Res.">
        <title>Reductive evolution and niche adaptation inferred from the genome of Mycobacterium ulcerans, the causative agent of Buruli ulcer.</title>
        <authorList>
            <person name="Stinear T.P."/>
            <person name="Seemann T."/>
            <person name="Pidot S."/>
            <person name="Frigui W."/>
            <person name="Reysset G."/>
            <person name="Garnier T."/>
            <person name="Meurice G."/>
            <person name="Simon D."/>
            <person name="Bouchier C."/>
            <person name="Ma L."/>
            <person name="Tichit M."/>
            <person name="Porter J.L."/>
            <person name="Ryan J."/>
            <person name="Johnson P.D.R."/>
            <person name="Davies J.K."/>
            <person name="Jenkin G.A."/>
            <person name="Small P.L.C."/>
            <person name="Jones L.M."/>
            <person name="Tekaia F."/>
            <person name="Laval F."/>
            <person name="Daffe M."/>
            <person name="Parkhill J."/>
            <person name="Cole S.T."/>
        </authorList>
    </citation>
    <scope>NUCLEOTIDE SEQUENCE [LARGE SCALE GENOMIC DNA]</scope>
    <source>
        <strain>Agy99</strain>
    </source>
</reference>
<comment type="function">
    <text evidence="1">Binds the 23S rRNA.</text>
</comment>
<comment type="cofactor">
    <cofactor evidence="1">
        <name>Zn(2+)</name>
        <dbReference type="ChEBI" id="CHEBI:29105"/>
    </cofactor>
    <text evidence="1">Binds 1 zinc ion per subunit.</text>
</comment>
<comment type="subunit">
    <text evidence="1">Part of the 50S ribosomal subunit.</text>
</comment>
<comment type="similarity">
    <text evidence="1">Belongs to the bacterial ribosomal protein bL31 family. Type A subfamily.</text>
</comment>
<organism>
    <name type="scientific">Mycobacterium ulcerans (strain Agy99)</name>
    <dbReference type="NCBI Taxonomy" id="362242"/>
    <lineage>
        <taxon>Bacteria</taxon>
        <taxon>Bacillati</taxon>
        <taxon>Actinomycetota</taxon>
        <taxon>Actinomycetes</taxon>
        <taxon>Mycobacteriales</taxon>
        <taxon>Mycobacteriaceae</taxon>
        <taxon>Mycobacterium</taxon>
        <taxon>Mycobacterium ulcerans group</taxon>
    </lineage>
</organism>
<protein>
    <recommendedName>
        <fullName evidence="1">Large ribosomal subunit protein bL31</fullName>
    </recommendedName>
    <alternativeName>
        <fullName evidence="2">50S ribosomal protein L31</fullName>
    </alternativeName>
</protein>
<sequence>MKSDIHPTYEETTVVCGCGNTFQTRSTKQGGRIVAEVCSQCHPFYTGKQKILDSGGRVARFERRYGKRKAGADKDQAAADK</sequence>
<name>RL31_MYCUA</name>
<dbReference type="EMBL" id="CP000325">
    <property type="protein sequence ID" value="ABL06031.1"/>
    <property type="molecule type" value="Genomic_DNA"/>
</dbReference>
<dbReference type="RefSeq" id="WP_011741636.1">
    <property type="nucleotide sequence ID" value="NC_008611.1"/>
</dbReference>
<dbReference type="SMR" id="A0PUL2"/>
<dbReference type="GeneID" id="93438315"/>
<dbReference type="KEGG" id="mul:MUL_3966"/>
<dbReference type="eggNOG" id="COG0254">
    <property type="taxonomic scope" value="Bacteria"/>
</dbReference>
<dbReference type="HOGENOM" id="CLU_114306_4_0_11"/>
<dbReference type="Proteomes" id="UP000000765">
    <property type="component" value="Chromosome"/>
</dbReference>
<dbReference type="GO" id="GO:1990904">
    <property type="term" value="C:ribonucleoprotein complex"/>
    <property type="evidence" value="ECO:0007669"/>
    <property type="project" value="UniProtKB-KW"/>
</dbReference>
<dbReference type="GO" id="GO:0005840">
    <property type="term" value="C:ribosome"/>
    <property type="evidence" value="ECO:0007669"/>
    <property type="project" value="UniProtKB-KW"/>
</dbReference>
<dbReference type="GO" id="GO:0046872">
    <property type="term" value="F:metal ion binding"/>
    <property type="evidence" value="ECO:0007669"/>
    <property type="project" value="UniProtKB-KW"/>
</dbReference>
<dbReference type="GO" id="GO:0019843">
    <property type="term" value="F:rRNA binding"/>
    <property type="evidence" value="ECO:0007669"/>
    <property type="project" value="UniProtKB-KW"/>
</dbReference>
<dbReference type="GO" id="GO:0003735">
    <property type="term" value="F:structural constituent of ribosome"/>
    <property type="evidence" value="ECO:0007669"/>
    <property type="project" value="InterPro"/>
</dbReference>
<dbReference type="GO" id="GO:0006412">
    <property type="term" value="P:translation"/>
    <property type="evidence" value="ECO:0007669"/>
    <property type="project" value="UniProtKB-UniRule"/>
</dbReference>
<dbReference type="Gene3D" id="4.10.830.30">
    <property type="entry name" value="Ribosomal protein L31"/>
    <property type="match status" value="1"/>
</dbReference>
<dbReference type="HAMAP" id="MF_00501">
    <property type="entry name" value="Ribosomal_bL31_1"/>
    <property type="match status" value="1"/>
</dbReference>
<dbReference type="InterPro" id="IPR034704">
    <property type="entry name" value="Ribosomal_bL28/bL31-like_sf"/>
</dbReference>
<dbReference type="InterPro" id="IPR002150">
    <property type="entry name" value="Ribosomal_bL31"/>
</dbReference>
<dbReference type="InterPro" id="IPR027491">
    <property type="entry name" value="Ribosomal_bL31_A"/>
</dbReference>
<dbReference type="InterPro" id="IPR042105">
    <property type="entry name" value="Ribosomal_bL31_sf"/>
</dbReference>
<dbReference type="NCBIfam" id="TIGR00105">
    <property type="entry name" value="L31"/>
    <property type="match status" value="1"/>
</dbReference>
<dbReference type="NCBIfam" id="NF000612">
    <property type="entry name" value="PRK00019.1"/>
    <property type="match status" value="1"/>
</dbReference>
<dbReference type="NCBIfam" id="NF001809">
    <property type="entry name" value="PRK00528.1"/>
    <property type="match status" value="1"/>
</dbReference>
<dbReference type="PANTHER" id="PTHR33280">
    <property type="entry name" value="50S RIBOSOMAL PROTEIN L31, CHLOROPLASTIC"/>
    <property type="match status" value="1"/>
</dbReference>
<dbReference type="PANTHER" id="PTHR33280:SF1">
    <property type="entry name" value="LARGE RIBOSOMAL SUBUNIT PROTEIN BL31C"/>
    <property type="match status" value="1"/>
</dbReference>
<dbReference type="Pfam" id="PF01197">
    <property type="entry name" value="Ribosomal_L31"/>
    <property type="match status" value="1"/>
</dbReference>
<dbReference type="PRINTS" id="PR01249">
    <property type="entry name" value="RIBOSOMALL31"/>
</dbReference>
<dbReference type="SUPFAM" id="SSF143800">
    <property type="entry name" value="L28p-like"/>
    <property type="match status" value="1"/>
</dbReference>
<dbReference type="PROSITE" id="PS01143">
    <property type="entry name" value="RIBOSOMAL_L31"/>
    <property type="match status" value="1"/>
</dbReference>
<evidence type="ECO:0000255" key="1">
    <source>
        <dbReference type="HAMAP-Rule" id="MF_00501"/>
    </source>
</evidence>
<evidence type="ECO:0000305" key="2"/>
<accession>A0PUL2</accession>
<keyword id="KW-0479">Metal-binding</keyword>
<keyword id="KW-0687">Ribonucleoprotein</keyword>
<keyword id="KW-0689">Ribosomal protein</keyword>
<keyword id="KW-0694">RNA-binding</keyword>
<keyword id="KW-0699">rRNA-binding</keyword>
<keyword id="KW-0862">Zinc</keyword>
<feature type="chain" id="PRO_1000126671" description="Large ribosomal subunit protein bL31">
    <location>
        <begin position="1"/>
        <end position="81"/>
    </location>
</feature>
<feature type="binding site" evidence="1">
    <location>
        <position position="16"/>
    </location>
    <ligand>
        <name>Zn(2+)</name>
        <dbReference type="ChEBI" id="CHEBI:29105"/>
    </ligand>
</feature>
<feature type="binding site" evidence="1">
    <location>
        <position position="18"/>
    </location>
    <ligand>
        <name>Zn(2+)</name>
        <dbReference type="ChEBI" id="CHEBI:29105"/>
    </ligand>
</feature>
<feature type="binding site" evidence="1">
    <location>
        <position position="38"/>
    </location>
    <ligand>
        <name>Zn(2+)</name>
        <dbReference type="ChEBI" id="CHEBI:29105"/>
    </ligand>
</feature>
<feature type="binding site" evidence="1">
    <location>
        <position position="41"/>
    </location>
    <ligand>
        <name>Zn(2+)</name>
        <dbReference type="ChEBI" id="CHEBI:29105"/>
    </ligand>
</feature>
<proteinExistence type="inferred from homology"/>
<gene>
    <name evidence="1" type="primary">rpmE</name>
    <name type="ordered locus">MUL_3966</name>
</gene>